<reference key="1">
    <citation type="journal article" date="2009" name="PLoS Genet.">
        <title>Organised genome dynamics in the Escherichia coli species results in highly diverse adaptive paths.</title>
        <authorList>
            <person name="Touchon M."/>
            <person name="Hoede C."/>
            <person name="Tenaillon O."/>
            <person name="Barbe V."/>
            <person name="Baeriswyl S."/>
            <person name="Bidet P."/>
            <person name="Bingen E."/>
            <person name="Bonacorsi S."/>
            <person name="Bouchier C."/>
            <person name="Bouvet O."/>
            <person name="Calteau A."/>
            <person name="Chiapello H."/>
            <person name="Clermont O."/>
            <person name="Cruveiller S."/>
            <person name="Danchin A."/>
            <person name="Diard M."/>
            <person name="Dossat C."/>
            <person name="Karoui M.E."/>
            <person name="Frapy E."/>
            <person name="Garry L."/>
            <person name="Ghigo J.M."/>
            <person name="Gilles A.M."/>
            <person name="Johnson J."/>
            <person name="Le Bouguenec C."/>
            <person name="Lescat M."/>
            <person name="Mangenot S."/>
            <person name="Martinez-Jehanne V."/>
            <person name="Matic I."/>
            <person name="Nassif X."/>
            <person name="Oztas S."/>
            <person name="Petit M.A."/>
            <person name="Pichon C."/>
            <person name="Rouy Z."/>
            <person name="Ruf C.S."/>
            <person name="Schneider D."/>
            <person name="Tourret J."/>
            <person name="Vacherie B."/>
            <person name="Vallenet D."/>
            <person name="Medigue C."/>
            <person name="Rocha E.P.C."/>
            <person name="Denamur E."/>
        </authorList>
    </citation>
    <scope>NUCLEOTIDE SEQUENCE [LARGE SCALE GENOMIC DNA]</scope>
    <source>
        <strain>UMN026 / ExPEC</strain>
    </source>
</reference>
<keyword id="KW-0997">Cell inner membrane</keyword>
<keyword id="KW-1003">Cell membrane</keyword>
<keyword id="KW-0472">Membrane</keyword>
<keyword id="KW-0812">Transmembrane</keyword>
<keyword id="KW-1133">Transmembrane helix</keyword>
<sequence>MKQFLDFLPLVVFFAFYKIYDIYAATAALIVATAIVLIYSWVRFRKVEKMALITFVLVVVFGGLTLFFHNDEFIKWKVTVIYALFAGALLVSQWVMKKPLIQRMLGKELTLPQPVWSKLNLAWAVFFILCGLANIYIAFWLPQNIWVNFKVFGLTALTLIFTLLSGIYIYRHMPQEDKS</sequence>
<organism>
    <name type="scientific">Escherichia coli O17:K52:H18 (strain UMN026 / ExPEC)</name>
    <dbReference type="NCBI Taxonomy" id="585056"/>
    <lineage>
        <taxon>Bacteria</taxon>
        <taxon>Pseudomonadati</taxon>
        <taxon>Pseudomonadota</taxon>
        <taxon>Gammaproteobacteria</taxon>
        <taxon>Enterobacterales</taxon>
        <taxon>Enterobacteriaceae</taxon>
        <taxon>Escherichia</taxon>
    </lineage>
</organism>
<comment type="function">
    <text evidence="1">Plays a role in cell envelope biogenesis, maintenance of cell envelope integrity and membrane homeostasis.</text>
</comment>
<comment type="subcellular location">
    <subcellularLocation>
        <location evidence="1">Cell inner membrane</location>
        <topology evidence="1">Multi-pass membrane protein</topology>
    </subcellularLocation>
</comment>
<comment type="similarity">
    <text evidence="1">Belongs to the YciB family.</text>
</comment>
<protein>
    <recommendedName>
        <fullName evidence="1">Inner membrane-spanning protein YciB</fullName>
    </recommendedName>
</protein>
<accession>B7N467</accession>
<name>YCIB_ECOLU</name>
<evidence type="ECO:0000255" key="1">
    <source>
        <dbReference type="HAMAP-Rule" id="MF_00189"/>
    </source>
</evidence>
<feature type="chain" id="PRO_1000118581" description="Inner membrane-spanning protein YciB">
    <location>
        <begin position="1"/>
        <end position="179"/>
    </location>
</feature>
<feature type="transmembrane region" description="Helical" evidence="1">
    <location>
        <begin position="22"/>
        <end position="42"/>
    </location>
</feature>
<feature type="transmembrane region" description="Helical" evidence="1">
    <location>
        <begin position="50"/>
        <end position="70"/>
    </location>
</feature>
<feature type="transmembrane region" description="Helical" evidence="1">
    <location>
        <begin position="76"/>
        <end position="96"/>
    </location>
</feature>
<feature type="transmembrane region" description="Helical" evidence="1">
    <location>
        <begin position="121"/>
        <end position="141"/>
    </location>
</feature>
<feature type="transmembrane region" description="Helical" evidence="1">
    <location>
        <begin position="149"/>
        <end position="169"/>
    </location>
</feature>
<proteinExistence type="inferred from homology"/>
<dbReference type="EMBL" id="CU928163">
    <property type="protein sequence ID" value="CAR12760.1"/>
    <property type="molecule type" value="Genomic_DNA"/>
</dbReference>
<dbReference type="RefSeq" id="WP_000808667.1">
    <property type="nucleotide sequence ID" value="NC_011751.1"/>
</dbReference>
<dbReference type="RefSeq" id="YP_002412296.1">
    <property type="nucleotide sequence ID" value="NC_011751.1"/>
</dbReference>
<dbReference type="STRING" id="585056.ECUMN_1553"/>
<dbReference type="KEGG" id="eum:ECUMN_1553"/>
<dbReference type="PATRIC" id="fig|585056.7.peg.1749"/>
<dbReference type="HOGENOM" id="CLU_089554_2_0_6"/>
<dbReference type="Proteomes" id="UP000007097">
    <property type="component" value="Chromosome"/>
</dbReference>
<dbReference type="GO" id="GO:0005886">
    <property type="term" value="C:plasma membrane"/>
    <property type="evidence" value="ECO:0007669"/>
    <property type="project" value="UniProtKB-SubCell"/>
</dbReference>
<dbReference type="HAMAP" id="MF_00189">
    <property type="entry name" value="YciB"/>
    <property type="match status" value="1"/>
</dbReference>
<dbReference type="InterPro" id="IPR006008">
    <property type="entry name" value="YciB"/>
</dbReference>
<dbReference type="NCBIfam" id="TIGR00997">
    <property type="entry name" value="ispZ"/>
    <property type="match status" value="1"/>
</dbReference>
<dbReference type="NCBIfam" id="NF001324">
    <property type="entry name" value="PRK00259.1-2"/>
    <property type="match status" value="1"/>
</dbReference>
<dbReference type="NCBIfam" id="NF001325">
    <property type="entry name" value="PRK00259.1-3"/>
    <property type="match status" value="1"/>
</dbReference>
<dbReference type="NCBIfam" id="NF001326">
    <property type="entry name" value="PRK00259.1-4"/>
    <property type="match status" value="1"/>
</dbReference>
<dbReference type="PANTHER" id="PTHR36917:SF1">
    <property type="entry name" value="INNER MEMBRANE-SPANNING PROTEIN YCIB"/>
    <property type="match status" value="1"/>
</dbReference>
<dbReference type="PANTHER" id="PTHR36917">
    <property type="entry name" value="INTRACELLULAR SEPTATION PROTEIN A-RELATED"/>
    <property type="match status" value="1"/>
</dbReference>
<dbReference type="Pfam" id="PF04279">
    <property type="entry name" value="IspA"/>
    <property type="match status" value="1"/>
</dbReference>
<gene>
    <name evidence="1" type="primary">yciB</name>
    <name type="ordered locus">ECUMN_1553</name>
</gene>